<reference key="1">
    <citation type="journal article" date="2001" name="Proc. Natl. Acad. Sci. U.S.A.">
        <title>Genome sequence of an industrial microorganism Streptomyces avermitilis: deducing the ability of producing secondary metabolites.</title>
        <authorList>
            <person name="Omura S."/>
            <person name="Ikeda H."/>
            <person name="Ishikawa J."/>
            <person name="Hanamoto A."/>
            <person name="Takahashi C."/>
            <person name="Shinose M."/>
            <person name="Takahashi Y."/>
            <person name="Horikawa H."/>
            <person name="Nakazawa H."/>
            <person name="Osonoe T."/>
            <person name="Kikuchi H."/>
            <person name="Shiba T."/>
            <person name="Sakaki Y."/>
            <person name="Hattori M."/>
        </authorList>
    </citation>
    <scope>NUCLEOTIDE SEQUENCE [LARGE SCALE GENOMIC DNA]</scope>
    <source>
        <strain>ATCC 31267 / DSM 46492 / JCM 5070 / NBRC 14893 / NCIMB 12804 / NRRL 8165 / MA-4680</strain>
    </source>
</reference>
<reference key="2">
    <citation type="journal article" date="2003" name="Nat. Biotechnol.">
        <title>Complete genome sequence and comparative analysis of the industrial microorganism Streptomyces avermitilis.</title>
        <authorList>
            <person name="Ikeda H."/>
            <person name="Ishikawa J."/>
            <person name="Hanamoto A."/>
            <person name="Shinose M."/>
            <person name="Kikuchi H."/>
            <person name="Shiba T."/>
            <person name="Sakaki Y."/>
            <person name="Hattori M."/>
            <person name="Omura S."/>
        </authorList>
    </citation>
    <scope>NUCLEOTIDE SEQUENCE [LARGE SCALE GENOMIC DNA]</scope>
    <source>
        <strain>ATCC 31267 / DSM 46492 / JCM 5070 / NBRC 14893 / NCIMB 12804 / NRRL 8165 / MA-4680</strain>
    </source>
</reference>
<protein>
    <recommendedName>
        <fullName evidence="1">Ribose import ATP-binding protein RbsA 1</fullName>
        <ecNumber evidence="1">7.5.2.7</ecNumber>
    </recommendedName>
</protein>
<gene>
    <name evidence="1" type="primary">rbsA1</name>
    <name type="ordered locus">SAV_5319</name>
</gene>
<organism>
    <name type="scientific">Streptomyces avermitilis (strain ATCC 31267 / DSM 46492 / JCM 5070 / NBRC 14893 / NCIMB 12804 / NRRL 8165 / MA-4680)</name>
    <dbReference type="NCBI Taxonomy" id="227882"/>
    <lineage>
        <taxon>Bacteria</taxon>
        <taxon>Bacillati</taxon>
        <taxon>Actinomycetota</taxon>
        <taxon>Actinomycetes</taxon>
        <taxon>Kitasatosporales</taxon>
        <taxon>Streptomycetaceae</taxon>
        <taxon>Streptomyces</taxon>
    </lineage>
</organism>
<keyword id="KW-0067">ATP-binding</keyword>
<keyword id="KW-1003">Cell membrane</keyword>
<keyword id="KW-0472">Membrane</keyword>
<keyword id="KW-0547">Nucleotide-binding</keyword>
<keyword id="KW-1185">Reference proteome</keyword>
<keyword id="KW-0677">Repeat</keyword>
<keyword id="KW-0762">Sugar transport</keyword>
<keyword id="KW-1278">Translocase</keyword>
<keyword id="KW-0813">Transport</keyword>
<comment type="function">
    <text evidence="1">Part of the ABC transporter complex RbsABC involved in ribose import. Responsible for energy coupling to the transport system.</text>
</comment>
<comment type="catalytic activity">
    <reaction evidence="1">
        <text>D-ribose(out) + ATP + H2O = D-ribose(in) + ADP + phosphate + H(+)</text>
        <dbReference type="Rhea" id="RHEA:29903"/>
        <dbReference type="ChEBI" id="CHEBI:15377"/>
        <dbReference type="ChEBI" id="CHEBI:15378"/>
        <dbReference type="ChEBI" id="CHEBI:30616"/>
        <dbReference type="ChEBI" id="CHEBI:43474"/>
        <dbReference type="ChEBI" id="CHEBI:47013"/>
        <dbReference type="ChEBI" id="CHEBI:456216"/>
        <dbReference type="EC" id="7.5.2.7"/>
    </reaction>
</comment>
<comment type="subunit">
    <text evidence="1">The complex is composed of an ATP-binding protein (RbsA), two transmembrane proteins (RbsC) and a solute-binding protein (RbsB).</text>
</comment>
<comment type="subcellular location">
    <subcellularLocation>
        <location evidence="1">Cell membrane</location>
        <topology evidence="1">Peripheral membrane protein</topology>
    </subcellularLocation>
</comment>
<comment type="similarity">
    <text evidence="1">Belongs to the ABC transporter superfamily. Ribose importer (TC 3.A.1.2.1) family.</text>
</comment>
<proteinExistence type="inferred from homology"/>
<name>RBSA1_STRAW</name>
<sequence>MSNADELLRIEGIRKTFPGVVALDGVDFDLRRGEVHVLLGENGAGKSTLIKMLSGAYRPDGGRVLVEGEEVRIHGAQDSEALGIATIYQEFNLVPDLTVAENIFLGRQPRRLGLIDRKKMEADAAELLARVGVQVSPRARVRELGIARLQMVEIAKALSLNARVLIMDEPTAVLTSEEVEKLFAIVRQLREDGVGIVFITHHLEEIAALGDRVTVIRDGKSVGQVPASTSEDELVRLMVGRSIEQQYPRERPDSGAALLSVEGLTRDGVFHDVSFEVRAGEVVGVAGLVGAGRTEVVRAVFGADPYDRGSVQVAGARVPRHDVSAAMSAGIGLVPEDRKGQGLVLDASVEENLGLVTMRAATRGGLVDLKGQRDAAARVAGQLGVRMAGLGQHVRTLSGGNQQKVVIGKWLLADTKVLILDEPTRGIDVGAKVEIYQLINELTAAGAAVLMISSDLPEVLGMSDRVLVMAQGRIAGELGADEATQDSVMALAVSTNQYKPDKSDKPDASAGKTDQKEAPRGH</sequence>
<accession>Q82CM5</accession>
<evidence type="ECO:0000255" key="1">
    <source>
        <dbReference type="HAMAP-Rule" id="MF_01716"/>
    </source>
</evidence>
<evidence type="ECO:0000256" key="2">
    <source>
        <dbReference type="SAM" id="MobiDB-lite"/>
    </source>
</evidence>
<feature type="chain" id="PRO_0000261108" description="Ribose import ATP-binding protein RbsA 1">
    <location>
        <begin position="1"/>
        <end position="522"/>
    </location>
</feature>
<feature type="domain" description="ABC transporter 1" evidence="1">
    <location>
        <begin position="8"/>
        <end position="243"/>
    </location>
</feature>
<feature type="domain" description="ABC transporter 2" evidence="1">
    <location>
        <begin position="249"/>
        <end position="496"/>
    </location>
</feature>
<feature type="region of interest" description="Disordered" evidence="2">
    <location>
        <begin position="492"/>
        <end position="522"/>
    </location>
</feature>
<feature type="compositionally biased region" description="Basic and acidic residues" evidence="2">
    <location>
        <begin position="499"/>
        <end position="522"/>
    </location>
</feature>
<feature type="binding site" evidence="1">
    <location>
        <begin position="40"/>
        <end position="47"/>
    </location>
    <ligand>
        <name>ATP</name>
        <dbReference type="ChEBI" id="CHEBI:30616"/>
    </ligand>
</feature>
<dbReference type="EC" id="7.5.2.7" evidence="1"/>
<dbReference type="EMBL" id="BA000030">
    <property type="protein sequence ID" value="BAC73031.1"/>
    <property type="molecule type" value="Genomic_DNA"/>
</dbReference>
<dbReference type="RefSeq" id="WP_010986723.1">
    <property type="nucleotide sequence ID" value="NZ_JZJK01000072.1"/>
</dbReference>
<dbReference type="SMR" id="Q82CM5"/>
<dbReference type="GeneID" id="41542410"/>
<dbReference type="KEGG" id="sma:SAVERM_5319"/>
<dbReference type="eggNOG" id="COG1129">
    <property type="taxonomic scope" value="Bacteria"/>
</dbReference>
<dbReference type="HOGENOM" id="CLU_000604_92_0_11"/>
<dbReference type="OrthoDB" id="8416490at2"/>
<dbReference type="Proteomes" id="UP000000428">
    <property type="component" value="Chromosome"/>
</dbReference>
<dbReference type="GO" id="GO:0005886">
    <property type="term" value="C:plasma membrane"/>
    <property type="evidence" value="ECO:0007669"/>
    <property type="project" value="UniProtKB-SubCell"/>
</dbReference>
<dbReference type="GO" id="GO:0015611">
    <property type="term" value="F:ABC-type D-ribose transporter activity"/>
    <property type="evidence" value="ECO:0007669"/>
    <property type="project" value="UniProtKB-EC"/>
</dbReference>
<dbReference type="GO" id="GO:0005524">
    <property type="term" value="F:ATP binding"/>
    <property type="evidence" value="ECO:0007669"/>
    <property type="project" value="UniProtKB-KW"/>
</dbReference>
<dbReference type="GO" id="GO:0016887">
    <property type="term" value="F:ATP hydrolysis activity"/>
    <property type="evidence" value="ECO:0007669"/>
    <property type="project" value="InterPro"/>
</dbReference>
<dbReference type="CDD" id="cd03216">
    <property type="entry name" value="ABC_Carb_Monos_I"/>
    <property type="match status" value="1"/>
</dbReference>
<dbReference type="CDD" id="cd03215">
    <property type="entry name" value="ABC_Carb_Monos_II"/>
    <property type="match status" value="1"/>
</dbReference>
<dbReference type="FunFam" id="3.40.50.300:FF:000127">
    <property type="entry name" value="Ribose import ATP-binding protein RbsA"/>
    <property type="match status" value="1"/>
</dbReference>
<dbReference type="Gene3D" id="3.40.50.300">
    <property type="entry name" value="P-loop containing nucleotide triphosphate hydrolases"/>
    <property type="match status" value="2"/>
</dbReference>
<dbReference type="InterPro" id="IPR003593">
    <property type="entry name" value="AAA+_ATPase"/>
</dbReference>
<dbReference type="InterPro" id="IPR050107">
    <property type="entry name" value="ABC_carbohydrate_import_ATPase"/>
</dbReference>
<dbReference type="InterPro" id="IPR003439">
    <property type="entry name" value="ABC_transporter-like_ATP-bd"/>
</dbReference>
<dbReference type="InterPro" id="IPR017871">
    <property type="entry name" value="ABC_transporter-like_CS"/>
</dbReference>
<dbReference type="InterPro" id="IPR027417">
    <property type="entry name" value="P-loop_NTPase"/>
</dbReference>
<dbReference type="PANTHER" id="PTHR43790">
    <property type="entry name" value="CARBOHYDRATE TRANSPORT ATP-BINDING PROTEIN MG119-RELATED"/>
    <property type="match status" value="1"/>
</dbReference>
<dbReference type="PANTHER" id="PTHR43790:SF9">
    <property type="entry name" value="GALACTOFURANOSE TRANSPORTER ATP-BINDING PROTEIN YTFR"/>
    <property type="match status" value="1"/>
</dbReference>
<dbReference type="Pfam" id="PF00005">
    <property type="entry name" value="ABC_tran"/>
    <property type="match status" value="2"/>
</dbReference>
<dbReference type="SMART" id="SM00382">
    <property type="entry name" value="AAA"/>
    <property type="match status" value="2"/>
</dbReference>
<dbReference type="SUPFAM" id="SSF52540">
    <property type="entry name" value="P-loop containing nucleoside triphosphate hydrolases"/>
    <property type="match status" value="2"/>
</dbReference>
<dbReference type="PROSITE" id="PS00211">
    <property type="entry name" value="ABC_TRANSPORTER_1"/>
    <property type="match status" value="1"/>
</dbReference>
<dbReference type="PROSITE" id="PS50893">
    <property type="entry name" value="ABC_TRANSPORTER_2"/>
    <property type="match status" value="2"/>
</dbReference>
<dbReference type="PROSITE" id="PS51254">
    <property type="entry name" value="RBSA"/>
    <property type="match status" value="1"/>
</dbReference>